<protein>
    <recommendedName>
        <fullName evidence="1">ATP-dependent Clp protease proteolytic subunit</fullName>
        <ecNumber evidence="1">3.4.21.92</ecNumber>
    </recommendedName>
    <alternativeName>
        <fullName evidence="1">Endopeptidase Clp</fullName>
    </alternativeName>
</protein>
<comment type="function">
    <text evidence="1">Cleaves peptides in various proteins in a process that requires ATP hydrolysis. Has a chymotrypsin-like activity. Plays a major role in the degradation of misfolded proteins.</text>
</comment>
<comment type="catalytic activity">
    <reaction evidence="1">
        <text>Hydrolysis of proteins to small peptides in the presence of ATP and magnesium. alpha-casein is the usual test substrate. In the absence of ATP, only oligopeptides shorter than five residues are hydrolyzed (such as succinyl-Leu-Tyr-|-NHMec, and Leu-Tyr-Leu-|-Tyr-Trp, in which cleavage of the -Tyr-|-Leu- and -Tyr-|-Trp bonds also occurs).</text>
        <dbReference type="EC" id="3.4.21.92"/>
    </reaction>
</comment>
<comment type="subunit">
    <text evidence="1">Fourteen ClpP subunits assemble into 2 heptameric rings which stack back to back to give a disk-like structure with a central cavity, resembling the structure of eukaryotic proteasomes.</text>
</comment>
<comment type="subcellular location">
    <subcellularLocation>
        <location evidence="1">Cytoplasm</location>
    </subcellularLocation>
</comment>
<comment type="similarity">
    <text evidence="1">Belongs to the peptidase S14 family.</text>
</comment>
<sequence length="207" mass="22858">MNAMVLDDVIKSQAGYLNPYILEERQLNVTQLDVFSRLMMDRIIFLGTQIDDYTANTLQAQLLYLDSVDPGKDISIYINSPGGSVYAGLGIYDTMQFISSDVATICTGMAASMASVLLVAGAKGKRSALPHSRVMIHQPMGGAQGQASDIEITAREIQKLKKELYTIIADHSGTSFDKVWADSDRDYWMTAQEAKEYGMIDEVLIKK</sequence>
<gene>
    <name evidence="1" type="primary">clpP</name>
    <name type="ordered locus">BF3894</name>
</gene>
<keyword id="KW-0963">Cytoplasm</keyword>
<keyword id="KW-0378">Hydrolase</keyword>
<keyword id="KW-0645">Protease</keyword>
<keyword id="KW-0720">Serine protease</keyword>
<evidence type="ECO:0000255" key="1">
    <source>
        <dbReference type="HAMAP-Rule" id="MF_00444"/>
    </source>
</evidence>
<reference key="1">
    <citation type="journal article" date="2005" name="Science">
        <title>Extensive DNA inversions in the B. fragilis genome control variable gene expression.</title>
        <authorList>
            <person name="Cerdeno-Tarraga A.-M."/>
            <person name="Patrick S."/>
            <person name="Crossman L.C."/>
            <person name="Blakely G."/>
            <person name="Abratt V."/>
            <person name="Lennard N."/>
            <person name="Poxton I."/>
            <person name="Duerden B."/>
            <person name="Harris B."/>
            <person name="Quail M.A."/>
            <person name="Barron A."/>
            <person name="Clark L."/>
            <person name="Corton C."/>
            <person name="Doggett J."/>
            <person name="Holden M.T.G."/>
            <person name="Larke N."/>
            <person name="Line A."/>
            <person name="Lord A."/>
            <person name="Norbertczak H."/>
            <person name="Ormond D."/>
            <person name="Price C."/>
            <person name="Rabbinowitsch E."/>
            <person name="Woodward J."/>
            <person name="Barrell B.G."/>
            <person name="Parkhill J."/>
        </authorList>
    </citation>
    <scope>NUCLEOTIDE SEQUENCE [LARGE SCALE GENOMIC DNA]</scope>
    <source>
        <strain>ATCC 25285 / DSM 2151 / CCUG 4856 / JCM 11019 / LMG 10263 / NCTC 9343 / Onslow / VPI 2553 / EN-2</strain>
    </source>
</reference>
<proteinExistence type="inferred from homology"/>
<accession>Q5L8L6</accession>
<dbReference type="EC" id="3.4.21.92" evidence="1"/>
<dbReference type="EMBL" id="CR626927">
    <property type="protein sequence ID" value="CAH09571.1"/>
    <property type="molecule type" value="Genomic_DNA"/>
</dbReference>
<dbReference type="SMR" id="Q5L8L6"/>
<dbReference type="MEROPS" id="S14.001"/>
<dbReference type="PaxDb" id="272559-BF9343_3790"/>
<dbReference type="KEGG" id="bfs:BF9343_3790"/>
<dbReference type="eggNOG" id="COG0740">
    <property type="taxonomic scope" value="Bacteria"/>
</dbReference>
<dbReference type="HOGENOM" id="CLU_058707_3_1_10"/>
<dbReference type="Proteomes" id="UP000006731">
    <property type="component" value="Chromosome"/>
</dbReference>
<dbReference type="GO" id="GO:0005737">
    <property type="term" value="C:cytoplasm"/>
    <property type="evidence" value="ECO:0007669"/>
    <property type="project" value="UniProtKB-SubCell"/>
</dbReference>
<dbReference type="GO" id="GO:0009368">
    <property type="term" value="C:endopeptidase Clp complex"/>
    <property type="evidence" value="ECO:0007669"/>
    <property type="project" value="TreeGrafter"/>
</dbReference>
<dbReference type="GO" id="GO:0004176">
    <property type="term" value="F:ATP-dependent peptidase activity"/>
    <property type="evidence" value="ECO:0007669"/>
    <property type="project" value="InterPro"/>
</dbReference>
<dbReference type="GO" id="GO:0051117">
    <property type="term" value="F:ATPase binding"/>
    <property type="evidence" value="ECO:0007669"/>
    <property type="project" value="TreeGrafter"/>
</dbReference>
<dbReference type="GO" id="GO:0004252">
    <property type="term" value="F:serine-type endopeptidase activity"/>
    <property type="evidence" value="ECO:0007669"/>
    <property type="project" value="UniProtKB-UniRule"/>
</dbReference>
<dbReference type="GO" id="GO:0006515">
    <property type="term" value="P:protein quality control for misfolded or incompletely synthesized proteins"/>
    <property type="evidence" value="ECO:0007669"/>
    <property type="project" value="TreeGrafter"/>
</dbReference>
<dbReference type="CDD" id="cd07017">
    <property type="entry name" value="S14_ClpP_2"/>
    <property type="match status" value="1"/>
</dbReference>
<dbReference type="FunFam" id="3.90.226.10:FF:000002">
    <property type="entry name" value="ATP-dependent Clp protease proteolytic subunit"/>
    <property type="match status" value="1"/>
</dbReference>
<dbReference type="Gene3D" id="3.90.226.10">
    <property type="entry name" value="2-enoyl-CoA Hydratase, Chain A, domain 1"/>
    <property type="match status" value="1"/>
</dbReference>
<dbReference type="HAMAP" id="MF_00444">
    <property type="entry name" value="ClpP"/>
    <property type="match status" value="1"/>
</dbReference>
<dbReference type="InterPro" id="IPR001907">
    <property type="entry name" value="ClpP"/>
</dbReference>
<dbReference type="InterPro" id="IPR029045">
    <property type="entry name" value="ClpP/crotonase-like_dom_sf"/>
</dbReference>
<dbReference type="InterPro" id="IPR023562">
    <property type="entry name" value="ClpP/TepA"/>
</dbReference>
<dbReference type="InterPro" id="IPR033135">
    <property type="entry name" value="ClpP_His_AS"/>
</dbReference>
<dbReference type="NCBIfam" id="NF001368">
    <property type="entry name" value="PRK00277.1"/>
    <property type="match status" value="1"/>
</dbReference>
<dbReference type="NCBIfam" id="NF009205">
    <property type="entry name" value="PRK12553.1"/>
    <property type="match status" value="1"/>
</dbReference>
<dbReference type="NCBIfam" id="NF011091">
    <property type="entry name" value="PRK14514.1"/>
    <property type="match status" value="1"/>
</dbReference>
<dbReference type="PANTHER" id="PTHR10381">
    <property type="entry name" value="ATP-DEPENDENT CLP PROTEASE PROTEOLYTIC SUBUNIT"/>
    <property type="match status" value="1"/>
</dbReference>
<dbReference type="PANTHER" id="PTHR10381:SF70">
    <property type="entry name" value="ATP-DEPENDENT CLP PROTEASE PROTEOLYTIC SUBUNIT"/>
    <property type="match status" value="1"/>
</dbReference>
<dbReference type="Pfam" id="PF00574">
    <property type="entry name" value="CLP_protease"/>
    <property type="match status" value="1"/>
</dbReference>
<dbReference type="PRINTS" id="PR00127">
    <property type="entry name" value="CLPPROTEASEP"/>
</dbReference>
<dbReference type="SUPFAM" id="SSF52096">
    <property type="entry name" value="ClpP/crotonase"/>
    <property type="match status" value="1"/>
</dbReference>
<dbReference type="PROSITE" id="PS00382">
    <property type="entry name" value="CLP_PROTEASE_HIS"/>
    <property type="match status" value="1"/>
</dbReference>
<feature type="chain" id="PRO_0000226429" description="ATP-dependent Clp protease proteolytic subunit">
    <location>
        <begin position="1"/>
        <end position="207"/>
    </location>
</feature>
<feature type="active site" description="Nucleophile" evidence="1">
    <location>
        <position position="112"/>
    </location>
</feature>
<feature type="active site" evidence="1">
    <location>
        <position position="137"/>
    </location>
</feature>
<organism>
    <name type="scientific">Bacteroides fragilis (strain ATCC 25285 / DSM 2151 / CCUG 4856 / JCM 11019 / LMG 10263 / NCTC 9343 / Onslow / VPI 2553 / EN-2)</name>
    <dbReference type="NCBI Taxonomy" id="272559"/>
    <lineage>
        <taxon>Bacteria</taxon>
        <taxon>Pseudomonadati</taxon>
        <taxon>Bacteroidota</taxon>
        <taxon>Bacteroidia</taxon>
        <taxon>Bacteroidales</taxon>
        <taxon>Bacteroidaceae</taxon>
        <taxon>Bacteroides</taxon>
    </lineage>
</organism>
<name>CLPP_BACFN</name>